<accession>P38323</accession>
<accession>D6VQM2</accession>
<reference key="1">
    <citation type="journal article" date="1994" name="EMBO J.">
        <title>Complete DNA sequence of yeast chromosome II.</title>
        <authorList>
            <person name="Feldmann H."/>
            <person name="Aigle M."/>
            <person name="Aljinovic G."/>
            <person name="Andre B."/>
            <person name="Baclet M.C."/>
            <person name="Barthe C."/>
            <person name="Baur A."/>
            <person name="Becam A.-M."/>
            <person name="Biteau N."/>
            <person name="Boles E."/>
            <person name="Brandt T."/>
            <person name="Brendel M."/>
            <person name="Brueckner M."/>
            <person name="Bussereau F."/>
            <person name="Christiansen C."/>
            <person name="Contreras R."/>
            <person name="Crouzet M."/>
            <person name="Cziepluch C."/>
            <person name="Demolis N."/>
            <person name="Delaveau T."/>
            <person name="Doignon F."/>
            <person name="Domdey H."/>
            <person name="Duesterhus S."/>
            <person name="Dubois E."/>
            <person name="Dujon B."/>
            <person name="El Bakkoury M."/>
            <person name="Entian K.-D."/>
            <person name="Feuermann M."/>
            <person name="Fiers W."/>
            <person name="Fobo G.M."/>
            <person name="Fritz C."/>
            <person name="Gassenhuber J."/>
            <person name="Glansdorff N."/>
            <person name="Goffeau A."/>
            <person name="Grivell L.A."/>
            <person name="de Haan M."/>
            <person name="Hein C."/>
            <person name="Herbert C.J."/>
            <person name="Hollenberg C.P."/>
            <person name="Holmstroem K."/>
            <person name="Jacq C."/>
            <person name="Jacquet M."/>
            <person name="Jauniaux J.-C."/>
            <person name="Jonniaux J.-L."/>
            <person name="Kallesoee T."/>
            <person name="Kiesau P."/>
            <person name="Kirchrath L."/>
            <person name="Koetter P."/>
            <person name="Korol S."/>
            <person name="Liebl S."/>
            <person name="Logghe M."/>
            <person name="Lohan A.J.E."/>
            <person name="Louis E.J."/>
            <person name="Li Z.Y."/>
            <person name="Maat M.J."/>
            <person name="Mallet L."/>
            <person name="Mannhaupt G."/>
            <person name="Messenguy F."/>
            <person name="Miosga T."/>
            <person name="Molemans F."/>
            <person name="Mueller S."/>
            <person name="Nasr F."/>
            <person name="Obermaier B."/>
            <person name="Perea J."/>
            <person name="Pierard A."/>
            <person name="Piravandi E."/>
            <person name="Pohl F.M."/>
            <person name="Pohl T.M."/>
            <person name="Potier S."/>
            <person name="Proft M."/>
            <person name="Purnelle B."/>
            <person name="Ramezani Rad M."/>
            <person name="Rieger M."/>
            <person name="Rose M."/>
            <person name="Schaaff-Gerstenschlaeger I."/>
            <person name="Scherens B."/>
            <person name="Schwarzlose C."/>
            <person name="Skala J."/>
            <person name="Slonimski P.P."/>
            <person name="Smits P.H.M."/>
            <person name="Souciet J.-L."/>
            <person name="Steensma H.Y."/>
            <person name="Stucka R."/>
            <person name="Urrestarazu L.A."/>
            <person name="van der Aart Q.J.M."/>
            <person name="Van Dyck L."/>
            <person name="Vassarotti A."/>
            <person name="Vetter I."/>
            <person name="Vierendeels F."/>
            <person name="Vissers S."/>
            <person name="Wagner G."/>
            <person name="de Wergifosse P."/>
            <person name="Wolfe K.H."/>
            <person name="Zagulski M."/>
            <person name="Zimmermann F.K."/>
            <person name="Mewes H.-W."/>
            <person name="Kleine K."/>
        </authorList>
    </citation>
    <scope>NUCLEOTIDE SEQUENCE [LARGE SCALE GENOMIC DNA]</scope>
    <source>
        <strain>ATCC 204508 / S288c</strain>
    </source>
</reference>
<reference key="2">
    <citation type="journal article" date="2014" name="G3 (Bethesda)">
        <title>The reference genome sequence of Saccharomyces cerevisiae: Then and now.</title>
        <authorList>
            <person name="Engel S.R."/>
            <person name="Dietrich F.S."/>
            <person name="Fisk D.G."/>
            <person name="Binkley G."/>
            <person name="Balakrishnan R."/>
            <person name="Costanzo M.C."/>
            <person name="Dwight S.S."/>
            <person name="Hitz B.C."/>
            <person name="Karra K."/>
            <person name="Nash R.S."/>
            <person name="Weng S."/>
            <person name="Wong E.D."/>
            <person name="Lloyd P."/>
            <person name="Skrzypek M.S."/>
            <person name="Miyasato S.R."/>
            <person name="Simison M."/>
            <person name="Cherry J.M."/>
        </authorList>
    </citation>
    <scope>GENOME REANNOTATION</scope>
    <source>
        <strain>ATCC 204508 / S288c</strain>
    </source>
</reference>
<reference key="3">
    <citation type="journal article" date="1998" name="FEBS Lett.">
        <title>Mcx1p, a ClpX homologue in mitochondria of Saccharomyces cerevisiae.</title>
        <authorList>
            <person name="van Dyck L."/>
            <person name="Dembowski M."/>
            <person name="Neupert W."/>
            <person name="Langer T."/>
        </authorList>
    </citation>
    <scope>SUBCELLULAR LOCATION</scope>
    <scope>TOPOLOGY</scope>
</reference>
<reference key="4">
    <citation type="journal article" date="2003" name="Nature">
        <title>Global analysis of protein expression in yeast.</title>
        <authorList>
            <person name="Ghaemmaghami S."/>
            <person name="Huh W.-K."/>
            <person name="Bower K."/>
            <person name="Howson R.W."/>
            <person name="Belle A."/>
            <person name="Dephoure N."/>
            <person name="O'Shea E.K."/>
            <person name="Weissman J.S."/>
        </authorList>
    </citation>
    <scope>LEVEL OF PROTEIN EXPRESSION [LARGE SCALE ANALYSIS]</scope>
</reference>
<reference key="5">
    <citation type="journal article" date="2015" name="Cell">
        <title>Mitochondrial ClpX activates a key enzyme for heme biosynthesis and erythropoiesis.</title>
        <authorList>
            <person name="Kardon J.R."/>
            <person name="Yien Y.Y."/>
            <person name="Huston N.C."/>
            <person name="Branco D.S."/>
            <person name="Hildick-Smith G.J."/>
            <person name="Rhee K.Y."/>
            <person name="Paw B.H."/>
            <person name="Baker T.A."/>
        </authorList>
    </citation>
    <scope>FUNCTION</scope>
    <scope>DISRUPTION PHENOTYPE</scope>
    <scope>MUTAGENESIS OF TYR-174 AND GLU-206</scope>
    <scope>INTERACTION WITH HEM1</scope>
</reference>
<name>CLPX_YEAST</name>
<gene>
    <name evidence="8" type="primary">MCX1</name>
    <name evidence="12" type="ordered locus">YBR227C</name>
    <name type="ORF">YBR1524</name>
</gene>
<protein>
    <recommendedName>
        <fullName evidence="11">ATP-dependent clpX-like chaperone, mitochondrial</fullName>
        <shortName evidence="7">mtClpX</shortName>
    </recommendedName>
    <alternativeName>
        <fullName evidence="7">ATP-dependent unfoldase ClpX</fullName>
    </alternativeName>
</protein>
<keyword id="KW-0067">ATP-binding</keyword>
<keyword id="KW-0143">Chaperone</keyword>
<keyword id="KW-0472">Membrane</keyword>
<keyword id="KW-0496">Mitochondrion</keyword>
<keyword id="KW-0999">Mitochondrion inner membrane</keyword>
<keyword id="KW-0547">Nucleotide-binding</keyword>
<keyword id="KW-1185">Reference proteome</keyword>
<keyword id="KW-0809">Transit peptide</keyword>
<sequence length="520" mass="57946">MLKSASQNFFRAYSSRIGRYAATASGKLAQSRLSNIPTPKALKKFLDEYIVGQEIGKKVLSVAVYNHYLRINDKQKKGELQRQRELMEREKIADDRDEPIFSGNSESKAGWRNLQRQFNLAGREVDEDLELSKSNVLVVGPSGSGKTLLATTLAKILNVPIAITDCTQLTQAGYIGEDVEVCIERLLVNAEFDVARAEKGIIVLDEIDKLAKPAASIGTKDVSGEGVQQSLLKIIEGHKVEITVKRPVKHDIDGQKNQTTTKKDEVFVVDTSNILFMIMGAFVGLDKHIVKRIEDMKKIQKAGESVESSNSKEVEKERAKKFRFSNTLEQVELDNGKKVCALDLTTPTDLVSFGLIPELIGRVPIITALQPLQRDDLFHILKEPKNALLDQYEYIFKQFGVRLCVTQKALKKVAQFALKEGTGARGLRGIMERLLLNVNYDCPGSNIAYVLIDEATVDSLQETEHSLASQVDVKYYSGDEKDSLIRDVSEEDKKLGVMLEKELGHSANIHTPTIPKRSLT</sequence>
<dbReference type="EMBL" id="Z36096">
    <property type="protein sequence ID" value="CAA85190.1"/>
    <property type="molecule type" value="Genomic_DNA"/>
</dbReference>
<dbReference type="EMBL" id="BK006936">
    <property type="protein sequence ID" value="DAA07342.1"/>
    <property type="molecule type" value="Genomic_DNA"/>
</dbReference>
<dbReference type="PIR" id="S46103">
    <property type="entry name" value="S46103"/>
</dbReference>
<dbReference type="RefSeq" id="NP_009786.1">
    <property type="nucleotide sequence ID" value="NM_001178575.1"/>
</dbReference>
<dbReference type="SMR" id="P38323"/>
<dbReference type="BioGRID" id="32922">
    <property type="interactions" value="146"/>
</dbReference>
<dbReference type="DIP" id="DIP-6422N"/>
<dbReference type="FunCoup" id="P38323">
    <property type="interactions" value="774"/>
</dbReference>
<dbReference type="IntAct" id="P38323">
    <property type="interactions" value="4"/>
</dbReference>
<dbReference type="MINT" id="P38323"/>
<dbReference type="STRING" id="4932.YBR227C"/>
<dbReference type="iPTMnet" id="P38323"/>
<dbReference type="PaxDb" id="4932-YBR227C"/>
<dbReference type="PeptideAtlas" id="P38323"/>
<dbReference type="EnsemblFungi" id="YBR227C_mRNA">
    <property type="protein sequence ID" value="YBR227C"/>
    <property type="gene ID" value="YBR227C"/>
</dbReference>
<dbReference type="GeneID" id="852528"/>
<dbReference type="KEGG" id="sce:YBR227C"/>
<dbReference type="AGR" id="SGD:S000000431"/>
<dbReference type="SGD" id="S000000431">
    <property type="gene designation" value="MCX1"/>
</dbReference>
<dbReference type="VEuPathDB" id="FungiDB:YBR227C"/>
<dbReference type="eggNOG" id="KOG0745">
    <property type="taxonomic scope" value="Eukaryota"/>
</dbReference>
<dbReference type="GeneTree" id="ENSGT00390000017625"/>
<dbReference type="HOGENOM" id="CLU_014218_1_2_1"/>
<dbReference type="InParanoid" id="P38323"/>
<dbReference type="OMA" id="HRSDFTN"/>
<dbReference type="OrthoDB" id="1721884at2759"/>
<dbReference type="BioCyc" id="YEAST:G3O-29160-MONOMER"/>
<dbReference type="BioGRID-ORCS" id="852528">
    <property type="hits" value="1 hit in 10 CRISPR screens"/>
</dbReference>
<dbReference type="PRO" id="PR:P38323"/>
<dbReference type="Proteomes" id="UP000002311">
    <property type="component" value="Chromosome II"/>
</dbReference>
<dbReference type="RNAct" id="P38323">
    <property type="molecule type" value="protein"/>
</dbReference>
<dbReference type="GO" id="GO:0005743">
    <property type="term" value="C:mitochondrial inner membrane"/>
    <property type="evidence" value="ECO:0007669"/>
    <property type="project" value="UniProtKB-SubCell"/>
</dbReference>
<dbReference type="GO" id="GO:0005759">
    <property type="term" value="C:mitochondrial matrix"/>
    <property type="evidence" value="ECO:0000314"/>
    <property type="project" value="SGD"/>
</dbReference>
<dbReference type="GO" id="GO:0005739">
    <property type="term" value="C:mitochondrion"/>
    <property type="evidence" value="ECO:0007005"/>
    <property type="project" value="SGD"/>
</dbReference>
<dbReference type="GO" id="GO:0005524">
    <property type="term" value="F:ATP binding"/>
    <property type="evidence" value="ECO:0000314"/>
    <property type="project" value="SGD"/>
</dbReference>
<dbReference type="GO" id="GO:0016887">
    <property type="term" value="F:ATP hydrolysis activity"/>
    <property type="evidence" value="ECO:0000314"/>
    <property type="project" value="SGD"/>
</dbReference>
<dbReference type="GO" id="GO:0030150">
    <property type="term" value="P:protein import into mitochondrial matrix"/>
    <property type="evidence" value="ECO:0000315"/>
    <property type="project" value="SGD"/>
</dbReference>
<dbReference type="GO" id="GO:0042026">
    <property type="term" value="P:protein refolding"/>
    <property type="evidence" value="ECO:0000315"/>
    <property type="project" value="SGD"/>
</dbReference>
<dbReference type="GO" id="GO:0051603">
    <property type="term" value="P:proteolysis involved in protein catabolic process"/>
    <property type="evidence" value="ECO:0000318"/>
    <property type="project" value="GO_Central"/>
</dbReference>
<dbReference type="CDD" id="cd19497">
    <property type="entry name" value="RecA-like_ClpX"/>
    <property type="match status" value="1"/>
</dbReference>
<dbReference type="FunFam" id="3.40.50.300:FF:002216">
    <property type="entry name" value="ATP-dependent Clp protease"/>
    <property type="match status" value="1"/>
</dbReference>
<dbReference type="FunFam" id="1.10.8.60:FF:000138">
    <property type="entry name" value="ATP-dependent Clp protease ATP-binding subunit ClpX"/>
    <property type="match status" value="1"/>
</dbReference>
<dbReference type="Gene3D" id="1.10.8.60">
    <property type="match status" value="1"/>
</dbReference>
<dbReference type="Gene3D" id="3.40.50.300">
    <property type="entry name" value="P-loop containing nucleotide triphosphate hydrolases"/>
    <property type="match status" value="1"/>
</dbReference>
<dbReference type="InterPro" id="IPR003593">
    <property type="entry name" value="AAA+_ATPase"/>
</dbReference>
<dbReference type="InterPro" id="IPR050052">
    <property type="entry name" value="ATP-dep_Clp_protease_ClpX"/>
</dbReference>
<dbReference type="InterPro" id="IPR003959">
    <property type="entry name" value="ATPase_AAA_core"/>
</dbReference>
<dbReference type="InterPro" id="IPR019489">
    <property type="entry name" value="Clp_ATPase_C"/>
</dbReference>
<dbReference type="InterPro" id="IPR027417">
    <property type="entry name" value="P-loop_NTPase"/>
</dbReference>
<dbReference type="NCBIfam" id="NF003745">
    <property type="entry name" value="PRK05342.1"/>
    <property type="match status" value="1"/>
</dbReference>
<dbReference type="PANTHER" id="PTHR48102:SF7">
    <property type="entry name" value="ATP-DEPENDENT CLP PROTEASE ATP-BINDING SUBUNIT CLPX-LIKE, MITOCHONDRIAL"/>
    <property type="match status" value="1"/>
</dbReference>
<dbReference type="PANTHER" id="PTHR48102">
    <property type="entry name" value="ATP-DEPENDENT CLP PROTEASE ATP-BINDING SUBUNIT CLPX-LIKE, MITOCHONDRIAL-RELATED"/>
    <property type="match status" value="1"/>
</dbReference>
<dbReference type="Pfam" id="PF07724">
    <property type="entry name" value="AAA_2"/>
    <property type="match status" value="1"/>
</dbReference>
<dbReference type="Pfam" id="PF10431">
    <property type="entry name" value="ClpB_D2-small"/>
    <property type="match status" value="1"/>
</dbReference>
<dbReference type="SMART" id="SM00382">
    <property type="entry name" value="AAA"/>
    <property type="match status" value="1"/>
</dbReference>
<dbReference type="SMART" id="SM01086">
    <property type="entry name" value="ClpB_D2-small"/>
    <property type="match status" value="1"/>
</dbReference>
<dbReference type="SUPFAM" id="SSF52540">
    <property type="entry name" value="P-loop containing nucleoside triphosphate hydrolases"/>
    <property type="match status" value="1"/>
</dbReference>
<evidence type="ECO:0000250" key="1">
    <source>
        <dbReference type="UniProtKB" id="O76031"/>
    </source>
</evidence>
<evidence type="ECO:0000255" key="2"/>
<evidence type="ECO:0000255" key="3">
    <source>
        <dbReference type="PROSITE-ProRule" id="PRU00499"/>
    </source>
</evidence>
<evidence type="ECO:0000269" key="4">
    <source>
    </source>
</evidence>
<evidence type="ECO:0000269" key="5">
    <source>
    </source>
</evidence>
<evidence type="ECO:0000269" key="6">
    <source>
    </source>
</evidence>
<evidence type="ECO:0000303" key="7">
    <source>
    </source>
</evidence>
<evidence type="ECO:0000303" key="8">
    <source>
    </source>
</evidence>
<evidence type="ECO:0000305" key="9"/>
<evidence type="ECO:0000305" key="10">
    <source>
    </source>
</evidence>
<evidence type="ECO:0000305" key="11">
    <source>
    </source>
</evidence>
<evidence type="ECO:0000312" key="12">
    <source>
        <dbReference type="SGD" id="S000000431"/>
    </source>
</evidence>
<proteinExistence type="evidence at protein level"/>
<feature type="transit peptide" description="Mitochondrion" evidence="2">
    <location>
        <begin position="1"/>
        <end position="13"/>
    </location>
</feature>
<feature type="chain" id="PRO_0000160569" description="ATP-dependent clpX-like chaperone, mitochondrial" evidence="2">
    <location>
        <begin position="14"/>
        <end position="520"/>
    </location>
</feature>
<feature type="binding site" evidence="3">
    <location>
        <begin position="140"/>
        <end position="147"/>
    </location>
    <ligand>
        <name>ATP</name>
        <dbReference type="ChEBI" id="CHEBI:30616"/>
    </ligand>
</feature>
<feature type="mutagenesis site" description="Abrogates unfolding activity of unfoldase. Mildly increased ATPase activity. Reduces ALA synthesis." evidence="5">
    <original>Y</original>
    <variation>A</variation>
    <location>
        <position position="174"/>
    </location>
</feature>
<feature type="mutagenesis site" description="Blocks ATP hydrolysis." evidence="10">
    <original>E</original>
    <variation>Q</variation>
    <location>
        <position position="206"/>
    </location>
</feature>
<organism>
    <name type="scientific">Saccharomyces cerevisiae (strain ATCC 204508 / S288c)</name>
    <name type="common">Baker's yeast</name>
    <dbReference type="NCBI Taxonomy" id="559292"/>
    <lineage>
        <taxon>Eukaryota</taxon>
        <taxon>Fungi</taxon>
        <taxon>Dikarya</taxon>
        <taxon>Ascomycota</taxon>
        <taxon>Saccharomycotina</taxon>
        <taxon>Saccharomycetes</taxon>
        <taxon>Saccharomycetales</taxon>
        <taxon>Saccharomycetaceae</taxon>
        <taxon>Saccharomyces</taxon>
    </lineage>
</organism>
<comment type="function">
    <text evidence="5">ATP-dependent unfoldase that stimulates the incorporation of the pyridoxal phosphate cofactor into 5-aminolevulinate synthase (HEM1), thereby activating 5-aminolevulinate (ALA) synthesis, the first step in heme biosynthesis. Up-regulates heme biosynthesis.</text>
</comment>
<comment type="subunit">
    <text evidence="1 5">Homohexamer that forms a ring structure; this hexamerization requires ATP binding (By similarity). Interacts with HEM1 (PubMed:25957689).</text>
</comment>
<comment type="subcellular location">
    <subcellularLocation>
        <location evidence="6">Mitochondrion inner membrane</location>
        <topology evidence="6">Peripheral membrane protein</topology>
        <orientation evidence="6">Matrix side</orientation>
    </subcellularLocation>
</comment>
<comment type="disruption phenotype">
    <text evidence="5">5-fold reduced production of the first heme precursor 5-aminolevulinic acid (ALA) and 2-fold reduction in total heme. In combination with a disruption of HEM25 or an inactivated HEM1, abrogates mitochondrial respiration.</text>
</comment>
<comment type="miscellaneous">
    <text evidence="4">Present with 10900 molecules/cell in log phase SD medium.</text>
</comment>
<comment type="similarity">
    <text evidence="9">Belongs to the ClpX chaperone family.</text>
</comment>